<name>WASP_HUMAN</name>
<gene>
    <name type="primary">WAS</name>
    <name type="synonym">IMD2</name>
</gene>
<keyword id="KW-0002">3D-structure</keyword>
<keyword id="KW-0963">Cytoplasm</keyword>
<keyword id="KW-0206">Cytoskeleton</keyword>
<keyword id="KW-0903">Direct protein sequencing</keyword>
<keyword id="KW-0225">Disease variant</keyword>
<keyword id="KW-0539">Nucleus</keyword>
<keyword id="KW-0597">Phosphoprotein</keyword>
<keyword id="KW-1267">Proteomics identification</keyword>
<keyword id="KW-1185">Reference proteome</keyword>
<keyword id="KW-0677">Repeat</keyword>
<protein>
    <recommendedName>
        <fullName evidence="38">Actin nucleation-promoting factor WAS</fullName>
    </recommendedName>
    <alternativeName>
        <fullName>Wiskott-Aldrich syndrome protein</fullName>
        <shortName>WASp</shortName>
    </alternativeName>
</protein>
<dbReference type="EMBL" id="U12707">
    <property type="protein sequence ID" value="AAA62663.1"/>
    <property type="molecule type" value="mRNA"/>
</dbReference>
<dbReference type="EMBL" id="U18935">
    <property type="protein sequence ID" value="AAA60381.1"/>
    <property type="molecule type" value="Genomic_DNA"/>
</dbReference>
<dbReference type="EMBL" id="U19927">
    <property type="protein sequence ID" value="AAC50140.1"/>
    <property type="molecule type" value="mRNA"/>
</dbReference>
<dbReference type="EMBL" id="AF115549">
    <property type="protein sequence ID" value="AAD26691.1"/>
    <property type="molecule type" value="Genomic_DNA"/>
</dbReference>
<dbReference type="EMBL" id="AF196970">
    <property type="status" value="NOT_ANNOTATED_CDS"/>
    <property type="molecule type" value="Genomic_DNA"/>
</dbReference>
<dbReference type="EMBL" id="BC002961">
    <property type="protein sequence ID" value="AAH02961.1"/>
    <property type="status" value="ALT_INIT"/>
    <property type="molecule type" value="mRNA"/>
</dbReference>
<dbReference type="EMBL" id="BC012738">
    <property type="protein sequence ID" value="AAH12738.1"/>
    <property type="molecule type" value="mRNA"/>
</dbReference>
<dbReference type="CCDS" id="CCDS14303.1"/>
<dbReference type="PIR" id="A54747">
    <property type="entry name" value="A55197"/>
</dbReference>
<dbReference type="RefSeq" id="NP_000368.1">
    <property type="nucleotide sequence ID" value="NM_000377.3"/>
</dbReference>
<dbReference type="RefSeq" id="XP_047298390.1">
    <property type="nucleotide sequence ID" value="XM_047442434.1"/>
</dbReference>
<dbReference type="RefSeq" id="XP_054183689.1">
    <property type="nucleotide sequence ID" value="XM_054327714.1"/>
</dbReference>
<dbReference type="PDB" id="1CEE">
    <property type="method" value="NMR"/>
    <property type="chains" value="B=230-288"/>
</dbReference>
<dbReference type="PDB" id="1EJ5">
    <property type="method" value="NMR"/>
    <property type="chains" value="A=242-310, A=461-492"/>
</dbReference>
<dbReference type="PDB" id="1T84">
    <property type="method" value="NMR"/>
    <property type="chains" value="A=242-310, A=461-492"/>
</dbReference>
<dbReference type="PDB" id="2A3Z">
    <property type="method" value="X-ray"/>
    <property type="resolution" value="2.08 A"/>
    <property type="chains" value="C=430-458"/>
</dbReference>
<dbReference type="PDB" id="2K42">
    <property type="method" value="NMR"/>
    <property type="chains" value="A=242-310"/>
</dbReference>
<dbReference type="PDB" id="2OT0">
    <property type="method" value="X-ray"/>
    <property type="resolution" value="2.05 A"/>
    <property type="chains" value="E/F/G/H=488-502"/>
</dbReference>
<dbReference type="PDBsum" id="1CEE"/>
<dbReference type="PDBsum" id="1EJ5"/>
<dbReference type="PDBsum" id="1T84"/>
<dbReference type="PDBsum" id="2A3Z"/>
<dbReference type="PDBsum" id="2K42"/>
<dbReference type="PDBsum" id="2OT0"/>
<dbReference type="BMRB" id="P42768"/>
<dbReference type="SMR" id="P42768"/>
<dbReference type="BioGRID" id="113293">
    <property type="interactions" value="82"/>
</dbReference>
<dbReference type="CORUM" id="P42768"/>
<dbReference type="DIP" id="DIP-431N"/>
<dbReference type="ELM" id="P42768"/>
<dbReference type="FunCoup" id="P42768">
    <property type="interactions" value="854"/>
</dbReference>
<dbReference type="IntAct" id="P42768">
    <property type="interactions" value="52"/>
</dbReference>
<dbReference type="MINT" id="P42768"/>
<dbReference type="STRING" id="9606.ENSP00000365891"/>
<dbReference type="DrugBank" id="DB01731">
    <property type="generic name" value="(S)-wiskostatin"/>
</dbReference>
<dbReference type="GlyGen" id="P42768">
    <property type="glycosylation" value="4 sites"/>
</dbReference>
<dbReference type="iPTMnet" id="P42768"/>
<dbReference type="PhosphoSitePlus" id="P42768"/>
<dbReference type="BioMuta" id="WAS"/>
<dbReference type="MassIVE" id="P42768"/>
<dbReference type="PaxDb" id="9606-ENSP00000365891"/>
<dbReference type="PeptideAtlas" id="P42768"/>
<dbReference type="ProteomicsDB" id="55550"/>
<dbReference type="Antibodypedia" id="701">
    <property type="antibodies" value="516 antibodies from 42 providers"/>
</dbReference>
<dbReference type="DNASU" id="7454"/>
<dbReference type="Ensembl" id="ENST00000376701.5">
    <property type="protein sequence ID" value="ENSP00000365891.4"/>
    <property type="gene ID" value="ENSG00000015285.12"/>
</dbReference>
<dbReference type="Ensembl" id="ENST00000698625.1">
    <property type="protein sequence ID" value="ENSP00000513844.1"/>
    <property type="gene ID" value="ENSG00000015285.12"/>
</dbReference>
<dbReference type="GeneID" id="7454"/>
<dbReference type="KEGG" id="hsa:7454"/>
<dbReference type="MANE-Select" id="ENST00000376701.5">
    <property type="protein sequence ID" value="ENSP00000365891.4"/>
    <property type="RefSeq nucleotide sequence ID" value="NM_000377.3"/>
    <property type="RefSeq protein sequence ID" value="NP_000368.1"/>
</dbReference>
<dbReference type="UCSC" id="uc004dkm.5">
    <property type="organism name" value="human"/>
</dbReference>
<dbReference type="AGR" id="HGNC:12731"/>
<dbReference type="CTD" id="7454"/>
<dbReference type="DisGeNET" id="7454"/>
<dbReference type="GeneCards" id="WAS"/>
<dbReference type="GeneReviews" id="WAS"/>
<dbReference type="HGNC" id="HGNC:12731">
    <property type="gene designation" value="WAS"/>
</dbReference>
<dbReference type="HPA" id="ENSG00000015285">
    <property type="expression patterns" value="Tissue enhanced (bone marrow, lymphoid tissue)"/>
</dbReference>
<dbReference type="MalaCards" id="WAS"/>
<dbReference type="MIM" id="300299">
    <property type="type" value="phenotype"/>
</dbReference>
<dbReference type="MIM" id="300392">
    <property type="type" value="gene"/>
</dbReference>
<dbReference type="MIM" id="301000">
    <property type="type" value="phenotype"/>
</dbReference>
<dbReference type="MIM" id="313900">
    <property type="type" value="phenotype"/>
</dbReference>
<dbReference type="neXtProt" id="NX_P42768"/>
<dbReference type="OpenTargets" id="ENSG00000015285"/>
<dbReference type="Orphanet" id="906">
    <property type="disease" value="Wiskott-Aldrich syndrome"/>
</dbReference>
<dbReference type="Orphanet" id="86788">
    <property type="disease" value="X-linked severe congenital neutropenia"/>
</dbReference>
<dbReference type="Orphanet" id="852">
    <property type="disease" value="X-linked thrombocytopenia with normal platelets"/>
</dbReference>
<dbReference type="PharmGKB" id="PA37342"/>
<dbReference type="VEuPathDB" id="HostDB:ENSG00000015285"/>
<dbReference type="eggNOG" id="KOG3671">
    <property type="taxonomic scope" value="Eukaryota"/>
</dbReference>
<dbReference type="GeneTree" id="ENSGT00730000110895"/>
<dbReference type="HOGENOM" id="CLU_015385_3_2_1"/>
<dbReference type="InParanoid" id="P42768"/>
<dbReference type="OMA" id="HIQHIGW"/>
<dbReference type="OrthoDB" id="8963340at2759"/>
<dbReference type="PAN-GO" id="P42768">
    <property type="GO annotations" value="2 GO annotations based on evolutionary models"/>
</dbReference>
<dbReference type="PhylomeDB" id="P42768"/>
<dbReference type="TreeFam" id="TF316736"/>
<dbReference type="PathwayCommons" id="P42768"/>
<dbReference type="Reactome" id="R-HSA-202433">
    <property type="pathway name" value="Generation of second messenger molecules"/>
</dbReference>
<dbReference type="Reactome" id="R-HSA-2029482">
    <property type="pathway name" value="Regulation of actin dynamics for phagocytic cup formation"/>
</dbReference>
<dbReference type="Reactome" id="R-HSA-5663213">
    <property type="pathway name" value="RHO GTPases Activate WASPs and WAVEs"/>
</dbReference>
<dbReference type="Reactome" id="R-HSA-9013148">
    <property type="pathway name" value="CDC42 GTPase cycle"/>
</dbReference>
<dbReference type="Reactome" id="R-HSA-9013149">
    <property type="pathway name" value="RAC1 GTPase cycle"/>
</dbReference>
<dbReference type="Reactome" id="R-HSA-9013409">
    <property type="pathway name" value="RHOJ GTPase cycle"/>
</dbReference>
<dbReference type="Reactome" id="R-HSA-9664422">
    <property type="pathway name" value="FCGR3A-mediated phagocytosis"/>
</dbReference>
<dbReference type="SignaLink" id="P42768"/>
<dbReference type="SIGNOR" id="P42768"/>
<dbReference type="BioGRID-ORCS" id="7454">
    <property type="hits" value="18 hits in 775 CRISPR screens"/>
</dbReference>
<dbReference type="CD-CODE" id="804901D1">
    <property type="entry name" value="Nuclear speckle"/>
</dbReference>
<dbReference type="CD-CODE" id="F345034F">
    <property type="entry name" value="Signaling cluster"/>
</dbReference>
<dbReference type="ChiTaRS" id="WAS">
    <property type="organism name" value="human"/>
</dbReference>
<dbReference type="EvolutionaryTrace" id="P42768"/>
<dbReference type="GeneWiki" id="Wiskott%E2%80%93Aldrich_syndrome_protein"/>
<dbReference type="GenomeRNAi" id="7454"/>
<dbReference type="Pharos" id="P42768">
    <property type="development level" value="Tbio"/>
</dbReference>
<dbReference type="PRO" id="PR:P42768"/>
<dbReference type="Proteomes" id="UP000005640">
    <property type="component" value="Chromosome X"/>
</dbReference>
<dbReference type="RNAct" id="P42768">
    <property type="molecule type" value="protein"/>
</dbReference>
<dbReference type="Bgee" id="ENSG00000015285">
    <property type="expression patterns" value="Expressed in granulocyte and 179 other cell types or tissues"/>
</dbReference>
<dbReference type="ExpressionAtlas" id="P42768">
    <property type="expression patterns" value="baseline and differential"/>
</dbReference>
<dbReference type="GO" id="GO:0015629">
    <property type="term" value="C:actin cytoskeleton"/>
    <property type="evidence" value="ECO:0000304"/>
    <property type="project" value="ProtInc"/>
</dbReference>
<dbReference type="GO" id="GO:0005884">
    <property type="term" value="C:actin filament"/>
    <property type="evidence" value="ECO:0000314"/>
    <property type="project" value="CAFA"/>
</dbReference>
<dbReference type="GO" id="GO:0005911">
    <property type="term" value="C:cell-cell junction"/>
    <property type="evidence" value="ECO:0007669"/>
    <property type="project" value="Ensembl"/>
</dbReference>
<dbReference type="GO" id="GO:0005829">
    <property type="term" value="C:cytosol"/>
    <property type="evidence" value="ECO:0000314"/>
    <property type="project" value="CAFA"/>
</dbReference>
<dbReference type="GO" id="GO:0070062">
    <property type="term" value="C:extracellular exosome"/>
    <property type="evidence" value="ECO:0007005"/>
    <property type="project" value="UniProtKB"/>
</dbReference>
<dbReference type="GO" id="GO:0005634">
    <property type="term" value="C:nucleus"/>
    <property type="evidence" value="ECO:0000314"/>
    <property type="project" value="UniProtKB"/>
</dbReference>
<dbReference type="GO" id="GO:0045335">
    <property type="term" value="C:phagocytic vesicle"/>
    <property type="evidence" value="ECO:0007669"/>
    <property type="project" value="Ensembl"/>
</dbReference>
<dbReference type="GO" id="GO:0005886">
    <property type="term" value="C:plasma membrane"/>
    <property type="evidence" value="ECO:0000314"/>
    <property type="project" value="HPA"/>
</dbReference>
<dbReference type="GO" id="GO:0035861">
    <property type="term" value="C:site of double-strand break"/>
    <property type="evidence" value="ECO:0000314"/>
    <property type="project" value="UniProtKB"/>
</dbReference>
<dbReference type="GO" id="GO:0012506">
    <property type="term" value="C:vesicle membrane"/>
    <property type="evidence" value="ECO:0007669"/>
    <property type="project" value="Ensembl"/>
</dbReference>
<dbReference type="GO" id="GO:0003779">
    <property type="term" value="F:actin binding"/>
    <property type="evidence" value="ECO:0007669"/>
    <property type="project" value="InterPro"/>
</dbReference>
<dbReference type="GO" id="GO:0030695">
    <property type="term" value="F:GTPase regulator activity"/>
    <property type="evidence" value="ECO:0000304"/>
    <property type="project" value="ProtInc"/>
</dbReference>
<dbReference type="GO" id="GO:0042802">
    <property type="term" value="F:identical protein binding"/>
    <property type="evidence" value="ECO:0000353"/>
    <property type="project" value="IntAct"/>
</dbReference>
<dbReference type="GO" id="GO:0043274">
    <property type="term" value="F:phospholipase binding"/>
    <property type="evidence" value="ECO:0000353"/>
    <property type="project" value="BHF-UCL"/>
</dbReference>
<dbReference type="GO" id="GO:0019901">
    <property type="term" value="F:protein kinase binding"/>
    <property type="evidence" value="ECO:0000353"/>
    <property type="project" value="BHF-UCL"/>
</dbReference>
<dbReference type="GO" id="GO:0017124">
    <property type="term" value="F:SH3 domain binding"/>
    <property type="evidence" value="ECO:0000353"/>
    <property type="project" value="UniProtKB"/>
</dbReference>
<dbReference type="GO" id="GO:0031267">
    <property type="term" value="F:small GTPase binding"/>
    <property type="evidence" value="ECO:0000353"/>
    <property type="project" value="CAFA"/>
</dbReference>
<dbReference type="GO" id="GO:0030041">
    <property type="term" value="P:actin filament polymerization"/>
    <property type="evidence" value="ECO:0000314"/>
    <property type="project" value="UniProtKB"/>
</dbReference>
<dbReference type="GO" id="GO:0030048">
    <property type="term" value="P:actin filament-based movement"/>
    <property type="evidence" value="ECO:0007669"/>
    <property type="project" value="Ensembl"/>
</dbReference>
<dbReference type="GO" id="GO:0008154">
    <property type="term" value="P:actin polymerization or depolymerization"/>
    <property type="evidence" value="ECO:0000304"/>
    <property type="project" value="ProtInc"/>
</dbReference>
<dbReference type="GO" id="GO:0007596">
    <property type="term" value="P:blood coagulation"/>
    <property type="evidence" value="ECO:0000304"/>
    <property type="project" value="ProtInc"/>
</dbReference>
<dbReference type="GO" id="GO:0032488">
    <property type="term" value="P:Cdc42 protein signal transduction"/>
    <property type="evidence" value="ECO:0000315"/>
    <property type="project" value="CAFA"/>
</dbReference>
<dbReference type="GO" id="GO:0071346">
    <property type="term" value="P:cellular response to type II interferon"/>
    <property type="evidence" value="ECO:0007669"/>
    <property type="project" value="Ensembl"/>
</dbReference>
<dbReference type="GO" id="GO:0006952">
    <property type="term" value="P:defense response"/>
    <property type="evidence" value="ECO:0000304"/>
    <property type="project" value="ProtInc"/>
</dbReference>
<dbReference type="GO" id="GO:0016197">
    <property type="term" value="P:endosomal transport"/>
    <property type="evidence" value="ECO:0007669"/>
    <property type="project" value="Ensembl"/>
</dbReference>
<dbReference type="GO" id="GO:0008544">
    <property type="term" value="P:epidermis development"/>
    <property type="evidence" value="ECO:0000304"/>
    <property type="project" value="ProtInc"/>
</dbReference>
<dbReference type="GO" id="GO:0006955">
    <property type="term" value="P:immune response"/>
    <property type="evidence" value="ECO:0000315"/>
    <property type="project" value="HGNC-UCL"/>
</dbReference>
<dbReference type="GO" id="GO:2000146">
    <property type="term" value="P:negative regulation of cell motility"/>
    <property type="evidence" value="ECO:0000315"/>
    <property type="project" value="CACAO"/>
</dbReference>
<dbReference type="GO" id="GO:0051497">
    <property type="term" value="P:negative regulation of stress fiber assembly"/>
    <property type="evidence" value="ECO:0000315"/>
    <property type="project" value="CAFA"/>
</dbReference>
<dbReference type="GO" id="GO:1905168">
    <property type="term" value="P:positive regulation of double-strand break repair via homologous recombination"/>
    <property type="evidence" value="ECO:0000314"/>
    <property type="project" value="UniProtKB"/>
</dbReference>
<dbReference type="GO" id="GO:0045944">
    <property type="term" value="P:positive regulation of transcription by RNA polymerase II"/>
    <property type="evidence" value="ECO:0000314"/>
    <property type="project" value="UniProtKB"/>
</dbReference>
<dbReference type="GO" id="GO:0065003">
    <property type="term" value="P:protein-containing complex assembly"/>
    <property type="evidence" value="ECO:0000304"/>
    <property type="project" value="ProtInc"/>
</dbReference>
<dbReference type="GO" id="GO:0008064">
    <property type="term" value="P:regulation of actin polymerization or depolymerization"/>
    <property type="evidence" value="ECO:0000315"/>
    <property type="project" value="CAFA"/>
</dbReference>
<dbReference type="GO" id="GO:0010591">
    <property type="term" value="P:regulation of lamellipodium assembly"/>
    <property type="evidence" value="ECO:0000316"/>
    <property type="project" value="CAFA"/>
</dbReference>
<dbReference type="GO" id="GO:0051492">
    <property type="term" value="P:regulation of stress fiber assembly"/>
    <property type="evidence" value="ECO:0000316"/>
    <property type="project" value="CAFA"/>
</dbReference>
<dbReference type="GO" id="GO:0002625">
    <property type="term" value="P:regulation of T cell antigen processing and presentation"/>
    <property type="evidence" value="ECO:0000315"/>
    <property type="project" value="CACAO"/>
</dbReference>
<dbReference type="GO" id="GO:0042110">
    <property type="term" value="P:T cell activation"/>
    <property type="evidence" value="ECO:0007669"/>
    <property type="project" value="Ensembl"/>
</dbReference>
<dbReference type="CDD" id="cd00132">
    <property type="entry name" value="CRIB"/>
    <property type="match status" value="1"/>
</dbReference>
<dbReference type="CDD" id="cd01205">
    <property type="entry name" value="EVH1_WASP-like"/>
    <property type="match status" value="1"/>
</dbReference>
<dbReference type="DisProt" id="DP01171"/>
<dbReference type="FunFam" id="2.30.29.30:FF:000130">
    <property type="entry name" value="neural Wiskott-Aldrich syndrome protein"/>
    <property type="match status" value="1"/>
</dbReference>
<dbReference type="FunFam" id="3.90.810.10:FF:000003">
    <property type="entry name" value="Neural Wiskott-Aldrich syndrome protein-like"/>
    <property type="match status" value="1"/>
</dbReference>
<dbReference type="FunFam" id="3.90.810.10:FF:000008">
    <property type="entry name" value="wiskott-Aldrich syndrome protein"/>
    <property type="match status" value="1"/>
</dbReference>
<dbReference type="Gene3D" id="3.90.810.10">
    <property type="entry name" value="CRIB domain"/>
    <property type="match status" value="2"/>
</dbReference>
<dbReference type="Gene3D" id="2.30.29.30">
    <property type="entry name" value="Pleckstrin-homology domain (PH domain)/Phosphotyrosine-binding domain (PTB)"/>
    <property type="match status" value="1"/>
</dbReference>
<dbReference type="IDEAL" id="IID00269"/>
<dbReference type="InterPro" id="IPR000095">
    <property type="entry name" value="CRIB_dom"/>
</dbReference>
<dbReference type="InterPro" id="IPR036936">
    <property type="entry name" value="CRIB_dom_sf"/>
</dbReference>
<dbReference type="InterPro" id="IPR011993">
    <property type="entry name" value="PH-like_dom_sf"/>
</dbReference>
<dbReference type="InterPro" id="IPR011026">
    <property type="entry name" value="WAS_C"/>
</dbReference>
<dbReference type="InterPro" id="IPR033927">
    <property type="entry name" value="WASPfam_EVH1"/>
</dbReference>
<dbReference type="InterPro" id="IPR000697">
    <property type="entry name" value="WH1/EVH1_dom"/>
</dbReference>
<dbReference type="InterPro" id="IPR003124">
    <property type="entry name" value="WH2_dom"/>
</dbReference>
<dbReference type="PANTHER" id="PTHR11202:SF36">
    <property type="entry name" value="ACTIN NUCLEATION-PROMOTING FACTOR WASL"/>
    <property type="match status" value="1"/>
</dbReference>
<dbReference type="PANTHER" id="PTHR11202">
    <property type="entry name" value="SPROUTY-RELATED, EVH1 DOMAIN-CONTAINING PROTEIN FAMILY MEMBER"/>
    <property type="match status" value="1"/>
</dbReference>
<dbReference type="Pfam" id="PF00786">
    <property type="entry name" value="PBD"/>
    <property type="match status" value="1"/>
</dbReference>
<dbReference type="Pfam" id="PF00568">
    <property type="entry name" value="WH1"/>
    <property type="match status" value="1"/>
</dbReference>
<dbReference type="Pfam" id="PF02205">
    <property type="entry name" value="WH2"/>
    <property type="match status" value="1"/>
</dbReference>
<dbReference type="SMART" id="SM00285">
    <property type="entry name" value="PBD"/>
    <property type="match status" value="1"/>
</dbReference>
<dbReference type="SMART" id="SM00461">
    <property type="entry name" value="WH1"/>
    <property type="match status" value="1"/>
</dbReference>
<dbReference type="SMART" id="SM00246">
    <property type="entry name" value="WH2"/>
    <property type="match status" value="1"/>
</dbReference>
<dbReference type="SUPFAM" id="SSF50729">
    <property type="entry name" value="PH domain-like"/>
    <property type="match status" value="1"/>
</dbReference>
<dbReference type="SUPFAM" id="SSF47912">
    <property type="entry name" value="Wiscott-Aldrich syndrome protein, WASP, C-terminal domain"/>
    <property type="match status" value="2"/>
</dbReference>
<dbReference type="PROSITE" id="PS50108">
    <property type="entry name" value="CRIB"/>
    <property type="match status" value="1"/>
</dbReference>
<dbReference type="PROSITE" id="PS50229">
    <property type="entry name" value="WH1"/>
    <property type="match status" value="1"/>
</dbReference>
<dbReference type="PROSITE" id="PS51082">
    <property type="entry name" value="WH2"/>
    <property type="match status" value="1"/>
</dbReference>
<sequence>MSGGPMGGRPGGRGAPAVQQNIPSTLLQDHENQRLFEMLGRKCLTLATAVVQLYLALPPGAEHWTKEHCGAVCFVKDNPQKSYFIRLYGLQAGRLLWEQELYSQLVYSTPTPFFHTFAGDDCQAGLNFADEDEAQAFRALVQEKIQKRNQRQSGDRRQLPPPPTPANEERRGGLPPLPLHPGGDQGGPPVGPLSLGLATVDIQNPDITSSRYRGLPAPGPSPADKKRSGKKKISKADIGAPSGFKHVSHVGWDPQNGFDVNNLDPDLRSLFSRAGISEAQLTDAETSKLIYDFIEDQGGLEAVRQEMRRQEPLPPPPPPSRGGNQLPRPPIVGGNKGRSGPLPPVPLGIAPPPPTPRGPPPPGRGGPPPPPPPATGRSGPLPPPPPGAGGPPMPPPPPPPPPPPSSGNGPAPPPLPPALVPAGGLAPGGGRGALLDQIRQGIQLNKTPGAPESSALQPPPQSSEGLVGALMHVMQKRSRAIHSSDEGEDQAGDEDEDDEWDD</sequence>
<reference key="1">
    <citation type="journal article" date="1994" name="Cell">
        <title>Isolation of a novel gene mutated in Wiskott-Aldrich syndrome.</title>
        <authorList>
            <person name="Derry J.M.J."/>
            <person name="Ochs H.D."/>
            <person name="Francke U."/>
        </authorList>
    </citation>
    <scope>NUCLEOTIDE SEQUENCE [GENOMIC DNA / MRNA]</scope>
    <scope>TISSUE SPECIFICITY</scope>
    <source>
        <tissue>T-cell</tissue>
    </source>
</reference>
<reference key="2">
    <citation type="journal article" date="1994" name="Cell">
        <authorList>
            <person name="Derry J.M.J."/>
            <person name="Ochs H.D."/>
            <person name="Francke U."/>
        </authorList>
    </citation>
    <scope>ERRATUM OF PUBMED:8069912</scope>
</reference>
<reference key="3">
    <citation type="journal article" date="1995" name="Proc. Natl. Acad. Sci. U.S.A.">
        <title>Identification of mutations in the Wiskott-Aldrich syndrome gene and characterization of a polymorphic dinucleotide repeat at DXS6940, adjacent to the disease gene.</title>
        <authorList>
            <person name="Kwan S.-P."/>
            <person name="Hagemann T.L."/>
            <person name="Radtke B.E."/>
            <person name="Blaese R.M."/>
            <person name="Rosen F.S."/>
        </authorList>
    </citation>
    <scope>NUCLEOTIDE SEQUENCE [MRNA]</scope>
    <scope>VARIANTS WAS TRP-43; MET-45; LEU-58; LYS-133 AND THR-134</scope>
</reference>
<reference key="4">
    <citation type="journal article" date="1999" name="Biochem. Biophys. Res. Commun.">
        <title>The identification and characterization of two promoters and the complete genomic sequence for the Wiskott-Aldrich syndrome gene.</title>
        <authorList>
            <person name="Hagemann T.L."/>
            <person name="Kwan S.-P."/>
        </authorList>
    </citation>
    <scope>NUCLEOTIDE SEQUENCE [GENOMIC DNA]</scope>
</reference>
<reference key="5">
    <citation type="journal article" date="2005" name="Nature">
        <title>The DNA sequence of the human X chromosome.</title>
        <authorList>
            <person name="Ross M.T."/>
            <person name="Grafham D.V."/>
            <person name="Coffey A.J."/>
            <person name="Scherer S."/>
            <person name="McLay K."/>
            <person name="Muzny D."/>
            <person name="Platzer M."/>
            <person name="Howell G.R."/>
            <person name="Burrows C."/>
            <person name="Bird C.P."/>
            <person name="Frankish A."/>
            <person name="Lovell F.L."/>
            <person name="Howe K.L."/>
            <person name="Ashurst J.L."/>
            <person name="Fulton R.S."/>
            <person name="Sudbrak R."/>
            <person name="Wen G."/>
            <person name="Jones M.C."/>
            <person name="Hurles M.E."/>
            <person name="Andrews T.D."/>
            <person name="Scott C.E."/>
            <person name="Searle S."/>
            <person name="Ramser J."/>
            <person name="Whittaker A."/>
            <person name="Deadman R."/>
            <person name="Carter N.P."/>
            <person name="Hunt S.E."/>
            <person name="Chen R."/>
            <person name="Cree A."/>
            <person name="Gunaratne P."/>
            <person name="Havlak P."/>
            <person name="Hodgson A."/>
            <person name="Metzker M.L."/>
            <person name="Richards S."/>
            <person name="Scott G."/>
            <person name="Steffen D."/>
            <person name="Sodergren E."/>
            <person name="Wheeler D.A."/>
            <person name="Worley K.C."/>
            <person name="Ainscough R."/>
            <person name="Ambrose K.D."/>
            <person name="Ansari-Lari M.A."/>
            <person name="Aradhya S."/>
            <person name="Ashwell R.I."/>
            <person name="Babbage A.K."/>
            <person name="Bagguley C.L."/>
            <person name="Ballabio A."/>
            <person name="Banerjee R."/>
            <person name="Barker G.E."/>
            <person name="Barlow K.F."/>
            <person name="Barrett I.P."/>
            <person name="Bates K.N."/>
            <person name="Beare D.M."/>
            <person name="Beasley H."/>
            <person name="Beasley O."/>
            <person name="Beck A."/>
            <person name="Bethel G."/>
            <person name="Blechschmidt K."/>
            <person name="Brady N."/>
            <person name="Bray-Allen S."/>
            <person name="Bridgeman A.M."/>
            <person name="Brown A.J."/>
            <person name="Brown M.J."/>
            <person name="Bonnin D."/>
            <person name="Bruford E.A."/>
            <person name="Buhay C."/>
            <person name="Burch P."/>
            <person name="Burford D."/>
            <person name="Burgess J."/>
            <person name="Burrill W."/>
            <person name="Burton J."/>
            <person name="Bye J.M."/>
            <person name="Carder C."/>
            <person name="Carrel L."/>
            <person name="Chako J."/>
            <person name="Chapman J.C."/>
            <person name="Chavez D."/>
            <person name="Chen E."/>
            <person name="Chen G."/>
            <person name="Chen Y."/>
            <person name="Chen Z."/>
            <person name="Chinault C."/>
            <person name="Ciccodicola A."/>
            <person name="Clark S.Y."/>
            <person name="Clarke G."/>
            <person name="Clee C.M."/>
            <person name="Clegg S."/>
            <person name="Clerc-Blankenburg K."/>
            <person name="Clifford K."/>
            <person name="Cobley V."/>
            <person name="Cole C.G."/>
            <person name="Conquer J.S."/>
            <person name="Corby N."/>
            <person name="Connor R.E."/>
            <person name="David R."/>
            <person name="Davies J."/>
            <person name="Davis C."/>
            <person name="Davis J."/>
            <person name="Delgado O."/>
            <person name="Deshazo D."/>
            <person name="Dhami P."/>
            <person name="Ding Y."/>
            <person name="Dinh H."/>
            <person name="Dodsworth S."/>
            <person name="Draper H."/>
            <person name="Dugan-Rocha S."/>
            <person name="Dunham A."/>
            <person name="Dunn M."/>
            <person name="Durbin K.J."/>
            <person name="Dutta I."/>
            <person name="Eades T."/>
            <person name="Ellwood M."/>
            <person name="Emery-Cohen A."/>
            <person name="Errington H."/>
            <person name="Evans K.L."/>
            <person name="Faulkner L."/>
            <person name="Francis F."/>
            <person name="Frankland J."/>
            <person name="Fraser A.E."/>
            <person name="Galgoczy P."/>
            <person name="Gilbert J."/>
            <person name="Gill R."/>
            <person name="Gloeckner G."/>
            <person name="Gregory S.G."/>
            <person name="Gribble S."/>
            <person name="Griffiths C."/>
            <person name="Grocock R."/>
            <person name="Gu Y."/>
            <person name="Gwilliam R."/>
            <person name="Hamilton C."/>
            <person name="Hart E.A."/>
            <person name="Hawes A."/>
            <person name="Heath P.D."/>
            <person name="Heitmann K."/>
            <person name="Hennig S."/>
            <person name="Hernandez J."/>
            <person name="Hinzmann B."/>
            <person name="Ho S."/>
            <person name="Hoffs M."/>
            <person name="Howden P.J."/>
            <person name="Huckle E.J."/>
            <person name="Hume J."/>
            <person name="Hunt P.J."/>
            <person name="Hunt A.R."/>
            <person name="Isherwood J."/>
            <person name="Jacob L."/>
            <person name="Johnson D."/>
            <person name="Jones S."/>
            <person name="de Jong P.J."/>
            <person name="Joseph S.S."/>
            <person name="Keenan S."/>
            <person name="Kelly S."/>
            <person name="Kershaw J.K."/>
            <person name="Khan Z."/>
            <person name="Kioschis P."/>
            <person name="Klages S."/>
            <person name="Knights A.J."/>
            <person name="Kosiura A."/>
            <person name="Kovar-Smith C."/>
            <person name="Laird G.K."/>
            <person name="Langford C."/>
            <person name="Lawlor S."/>
            <person name="Leversha M."/>
            <person name="Lewis L."/>
            <person name="Liu W."/>
            <person name="Lloyd C."/>
            <person name="Lloyd D.M."/>
            <person name="Loulseged H."/>
            <person name="Loveland J.E."/>
            <person name="Lovell J.D."/>
            <person name="Lozado R."/>
            <person name="Lu J."/>
            <person name="Lyne R."/>
            <person name="Ma J."/>
            <person name="Maheshwari M."/>
            <person name="Matthews L.H."/>
            <person name="McDowall J."/>
            <person name="McLaren S."/>
            <person name="McMurray A."/>
            <person name="Meidl P."/>
            <person name="Meitinger T."/>
            <person name="Milne S."/>
            <person name="Miner G."/>
            <person name="Mistry S.L."/>
            <person name="Morgan M."/>
            <person name="Morris S."/>
            <person name="Mueller I."/>
            <person name="Mullikin J.C."/>
            <person name="Nguyen N."/>
            <person name="Nordsiek G."/>
            <person name="Nyakatura G."/>
            <person name="O'dell C.N."/>
            <person name="Okwuonu G."/>
            <person name="Palmer S."/>
            <person name="Pandian R."/>
            <person name="Parker D."/>
            <person name="Parrish J."/>
            <person name="Pasternak S."/>
            <person name="Patel D."/>
            <person name="Pearce A.V."/>
            <person name="Pearson D.M."/>
            <person name="Pelan S.E."/>
            <person name="Perez L."/>
            <person name="Porter K.M."/>
            <person name="Ramsey Y."/>
            <person name="Reichwald K."/>
            <person name="Rhodes S."/>
            <person name="Ridler K.A."/>
            <person name="Schlessinger D."/>
            <person name="Schueler M.G."/>
            <person name="Sehra H.K."/>
            <person name="Shaw-Smith C."/>
            <person name="Shen H."/>
            <person name="Sheridan E.M."/>
            <person name="Shownkeen R."/>
            <person name="Skuce C.D."/>
            <person name="Smith M.L."/>
            <person name="Sotheran E.C."/>
            <person name="Steingruber H.E."/>
            <person name="Steward C.A."/>
            <person name="Storey R."/>
            <person name="Swann R.M."/>
            <person name="Swarbreck D."/>
            <person name="Tabor P.E."/>
            <person name="Taudien S."/>
            <person name="Taylor T."/>
            <person name="Teague B."/>
            <person name="Thomas K."/>
            <person name="Thorpe A."/>
            <person name="Timms K."/>
            <person name="Tracey A."/>
            <person name="Trevanion S."/>
            <person name="Tromans A.C."/>
            <person name="d'Urso M."/>
            <person name="Verduzco D."/>
            <person name="Villasana D."/>
            <person name="Waldron L."/>
            <person name="Wall M."/>
            <person name="Wang Q."/>
            <person name="Warren J."/>
            <person name="Warry G.L."/>
            <person name="Wei X."/>
            <person name="West A."/>
            <person name="Whitehead S.L."/>
            <person name="Whiteley M.N."/>
            <person name="Wilkinson J.E."/>
            <person name="Willey D.L."/>
            <person name="Williams G."/>
            <person name="Williams L."/>
            <person name="Williamson A."/>
            <person name="Williamson H."/>
            <person name="Wilming L."/>
            <person name="Woodmansey R.L."/>
            <person name="Wray P.W."/>
            <person name="Yen J."/>
            <person name="Zhang J."/>
            <person name="Zhou J."/>
            <person name="Zoghbi H."/>
            <person name="Zorilla S."/>
            <person name="Buck D."/>
            <person name="Reinhardt R."/>
            <person name="Poustka A."/>
            <person name="Rosenthal A."/>
            <person name="Lehrach H."/>
            <person name="Meindl A."/>
            <person name="Minx P.J."/>
            <person name="Hillier L.W."/>
            <person name="Willard H.F."/>
            <person name="Wilson R.K."/>
            <person name="Waterston R.H."/>
            <person name="Rice C.M."/>
            <person name="Vaudin M."/>
            <person name="Coulson A."/>
            <person name="Nelson D.L."/>
            <person name="Weinstock G."/>
            <person name="Sulston J.E."/>
            <person name="Durbin R.M."/>
            <person name="Hubbard T."/>
            <person name="Gibbs R.A."/>
            <person name="Beck S."/>
            <person name="Rogers J."/>
            <person name="Bentley D.R."/>
        </authorList>
    </citation>
    <scope>NUCLEOTIDE SEQUENCE [LARGE SCALE GENOMIC DNA]</scope>
</reference>
<reference key="6">
    <citation type="journal article" date="2004" name="Genome Res.">
        <title>The status, quality, and expansion of the NIH full-length cDNA project: the Mammalian Gene Collection (MGC).</title>
        <authorList>
            <consortium name="The MGC Project Team"/>
        </authorList>
    </citation>
    <scope>NUCLEOTIDE SEQUENCE [LARGE SCALE MRNA]</scope>
    <source>
        <tissue>Lymph</tissue>
    </source>
</reference>
<reference key="7">
    <citation type="journal article" date="2003" name="Nat. Biotechnol.">
        <title>Exploring proteomes and analyzing protein processing by mass spectrometric identification of sorted N-terminal peptides.</title>
        <authorList>
            <person name="Gevaert K."/>
            <person name="Goethals M."/>
            <person name="Martens L."/>
            <person name="Van Damme J."/>
            <person name="Staes A."/>
            <person name="Thomas G.R."/>
            <person name="Vandekerckhove J."/>
        </authorList>
    </citation>
    <scope>PROTEIN SEQUENCE OF 2-13</scope>
    <source>
        <tissue>Platelet</tissue>
    </source>
</reference>
<reference key="8">
    <citation type="journal article" date="1996" name="Cell">
        <title>Wiskott-Aldrich syndrome protein, a novel effector for the GTPase CDC42Hs, is implicated in actin polymerization.</title>
        <authorList>
            <person name="Symons M."/>
            <person name="Derry J.M."/>
            <person name="Karlak B."/>
            <person name="Jiang S."/>
            <person name="Lemahieu V."/>
            <person name="Mccormick F."/>
            <person name="Francke U."/>
            <person name="Abo A."/>
        </authorList>
    </citation>
    <scope>FUNCTION</scope>
    <scope>SUBCELLULAR LOCATION</scope>
</reference>
<reference key="9">
    <citation type="journal article" date="1996" name="Proc. Natl. Acad. Sci. U.S.A.">
        <title>Direct interaction of the Wiskott-Aldrich syndrome protein with the GTPase Cdc42.</title>
        <authorList>
            <person name="Kolluri R."/>
            <person name="Tolias K.F."/>
            <person name="Carpenter C.L."/>
            <person name="Rosen F.S."/>
            <person name="Kirchhausen T."/>
        </authorList>
    </citation>
    <scope>INTERACTION WITH CDC42</scope>
</reference>
<reference key="10">
    <citation type="journal article" date="1997" name="Proc. Natl. Acad. Sci. U.S.A.">
        <title>WIP, a protein associated with Wiskott-Aldrich syndrome protein, induces actin polymerization and redistribution in lymphoid cells.</title>
        <authorList>
            <person name="Ramesh N."/>
            <person name="Anton I.M."/>
            <person name="Hartwig J.H."/>
            <person name="Geha R.S."/>
        </authorList>
    </citation>
    <scope>FUNCTION</scope>
    <scope>INTERACTION WITH WIP</scope>
</reference>
<reference key="11">
    <citation type="journal article" date="2002" name="J. Biol. Chem.">
        <title>Phosphorylation of tyrosine 291 enhances the ability of WASp to stimulate actin polymerization and filopodium formation. Wiskott-Aldrich Syndrome protein.</title>
        <authorList>
            <person name="Cory G.O."/>
            <person name="Garg R."/>
            <person name="Cramer R."/>
            <person name="Ridley A.J."/>
        </authorList>
    </citation>
    <scope>FUNCTION</scope>
    <scope>PHOSPHORYLATION AT TYR-291 BY HCK</scope>
    <scope>IDENTIFICATION BY MASS SPECTROMETRY</scope>
    <scope>INTERACTION WITH HCK</scope>
</reference>
<reference key="12">
    <citation type="journal article" date="2003" name="Mol. Cell">
        <title>Phosphorylation of the WASP-VCA domain increases its affinity for the Arp2/3 complex and enhances actin polymerization by WASP.</title>
        <authorList>
            <person name="Cory G.O.C."/>
            <person name="Cramer R."/>
            <person name="Blanchoin L."/>
            <person name="Ridley A.J."/>
        </authorList>
    </citation>
    <scope>FUNCTION</scope>
    <scope>PHOSPHORYLATION AT SER-483 AND SER-484</scope>
    <scope>INTERACTION WITH THE ARP2/3 COMPLEX</scope>
</reference>
<reference key="13">
    <citation type="journal article" date="2004" name="J. Exp. Med.">
        <title>Fyn and PTP-PEST-mediated regulation of Wiskott-Aldrich syndrome protein (WASp) tyrosine phosphorylation is required for coupling T cell antigen receptor engagement to WASp effector function and T cell activation.</title>
        <authorList>
            <person name="Badour K."/>
            <person name="Zhang J."/>
            <person name="Shi F."/>
            <person name="Leng Y."/>
            <person name="Collins M."/>
            <person name="Siminovitch K.A."/>
        </authorList>
    </citation>
    <scope>PHOSPHORYLATION AT TYR-291 BY FYN</scope>
</reference>
<reference key="14">
    <citation type="journal article" date="2005" name="Nat. Biotechnol.">
        <title>Immunoaffinity profiling of tyrosine phosphorylation in cancer cells.</title>
        <authorList>
            <person name="Rush J."/>
            <person name="Moritz A."/>
            <person name="Lee K.A."/>
            <person name="Guo A."/>
            <person name="Goss V.L."/>
            <person name="Spek E.J."/>
            <person name="Zhang H."/>
            <person name="Zha X.-M."/>
            <person name="Polakiewicz R.D."/>
            <person name="Comb M.J."/>
        </authorList>
    </citation>
    <scope>PHOSPHORYLATION [LARGE SCALE ANALYSIS] AT TYR-291</scope>
    <scope>IDENTIFICATION BY MASS SPECTROMETRY [LARGE SCALE ANALYSIS]</scope>
</reference>
<reference key="15">
    <citation type="journal article" date="2008" name="J. Proteome Res.">
        <title>Phosphoproteome of resting human platelets.</title>
        <authorList>
            <person name="Zahedi R.P."/>
            <person name="Lewandrowski U."/>
            <person name="Wiesner J."/>
            <person name="Wortelkamp S."/>
            <person name="Moebius J."/>
            <person name="Schuetz C."/>
            <person name="Walter U."/>
            <person name="Gambaryan S."/>
            <person name="Sickmann A."/>
        </authorList>
    </citation>
    <scope>PHOSPHORYLATION [LARGE SCALE ANALYSIS] AT TYR-291; SER-483 AND SER-484</scope>
    <scope>IDENTIFICATION BY MASS SPECTROMETRY [LARGE SCALE ANALYSIS]</scope>
    <source>
        <tissue>Platelet</tissue>
    </source>
</reference>
<reference key="16">
    <citation type="journal article" date="2009" name="Sci. Signal.">
        <title>Quantitative phosphoproteomic analysis of T cell receptor signaling reveals system-wide modulation of protein-protein interactions.</title>
        <authorList>
            <person name="Mayya V."/>
            <person name="Lundgren D.H."/>
            <person name="Hwang S.-I."/>
            <person name="Rezaul K."/>
            <person name="Wu L."/>
            <person name="Eng J.K."/>
            <person name="Rodionov V."/>
            <person name="Han D.K."/>
        </authorList>
    </citation>
    <scope>PHOSPHORYLATION [LARGE SCALE ANALYSIS] AT TYR-291 AND SER-483</scope>
    <scope>IDENTIFICATION BY MASS SPECTROMETRY [LARGE SCALE ANALYSIS]</scope>
    <source>
        <tissue>Leukemic T-cell</tissue>
    </source>
</reference>
<reference key="17">
    <citation type="journal article" date="2010" name="Sci. Transl. Med.">
        <title>Nuclear role of WASp in the pathogenesis of dysregulated TH1 immunity in human Wiskott-Aldrich syndrome.</title>
        <authorList>
            <person name="Taylor M.D."/>
            <person name="Sadhukhan S."/>
            <person name="Kottangada P."/>
            <person name="Ramgopal A."/>
            <person name="Sarkar K."/>
            <person name="D'Silva S."/>
            <person name="Selvakumar A."/>
            <person name="Candotti F."/>
            <person name="Vyas Y.M."/>
        </authorList>
    </citation>
    <scope>FUNCTION</scope>
    <scope>SUBCELLULAR LOCATION</scope>
    <scope>INVOLVEMENT IN WAS</scope>
</reference>
<reference key="18">
    <citation type="journal article" date="2011" name="BMC Syst. Biol.">
        <title>Initial characterization of the human central proteome.</title>
        <authorList>
            <person name="Burkard T.R."/>
            <person name="Planyavsky M."/>
            <person name="Kaupe I."/>
            <person name="Breitwieser F.P."/>
            <person name="Buerckstuemmer T."/>
            <person name="Bennett K.L."/>
            <person name="Superti-Furga G."/>
            <person name="Colinge J."/>
        </authorList>
    </citation>
    <scope>IDENTIFICATION BY MASS SPECTROMETRY [LARGE SCALE ANALYSIS]</scope>
</reference>
<reference key="19">
    <citation type="journal article" date="2013" name="J. Proteome Res.">
        <title>Toward a comprehensive characterization of a human cancer cell phosphoproteome.</title>
        <authorList>
            <person name="Zhou H."/>
            <person name="Di Palma S."/>
            <person name="Preisinger C."/>
            <person name="Peng M."/>
            <person name="Polat A.N."/>
            <person name="Heck A.J."/>
            <person name="Mohammed S."/>
        </authorList>
    </citation>
    <scope>PHOSPHORYLATION [LARGE SCALE ANALYSIS] AT SER-221</scope>
    <scope>IDENTIFICATION BY MASS SPECTROMETRY [LARGE SCALE ANALYSIS]</scope>
    <source>
        <tissue>Erythroleukemia</tissue>
    </source>
</reference>
<reference key="20">
    <citation type="journal article" date="2014" name="J. Proteomics">
        <title>An enzyme assisted RP-RPLC approach for in-depth analysis of human liver phosphoproteome.</title>
        <authorList>
            <person name="Bian Y."/>
            <person name="Song C."/>
            <person name="Cheng K."/>
            <person name="Dong M."/>
            <person name="Wang F."/>
            <person name="Huang J."/>
            <person name="Sun D."/>
            <person name="Wang L."/>
            <person name="Ye M."/>
            <person name="Zou H."/>
        </authorList>
    </citation>
    <scope>IDENTIFICATION BY MASS SPECTROMETRY [LARGE SCALE ANALYSIS]</scope>
    <source>
        <tissue>Liver</tissue>
    </source>
</reference>
<reference key="21">
    <citation type="journal article" date="2015" name="Proteomics">
        <title>N-terminome analysis of the human mitochondrial proteome.</title>
        <authorList>
            <person name="Vaca Jacome A.S."/>
            <person name="Rabilloud T."/>
            <person name="Schaeffer-Reiss C."/>
            <person name="Rompais M."/>
            <person name="Ayoub D."/>
            <person name="Lane L."/>
            <person name="Bairoch A."/>
            <person name="Van Dorsselaer A."/>
            <person name="Carapito C."/>
        </authorList>
    </citation>
    <scope>IDENTIFICATION BY MASS SPECTROMETRY [LARGE SCALE ANALYSIS]</scope>
</reference>
<reference key="22">
    <citation type="journal article" date="2018" name="Nature">
        <title>Nuclear ARP2/3 drives DNA break clustering for homology-directed repair.</title>
        <authorList>
            <person name="Schrank B.R."/>
            <person name="Aparicio T."/>
            <person name="Li Y."/>
            <person name="Chang W."/>
            <person name="Chait B.T."/>
            <person name="Gundersen G.G."/>
            <person name="Gottesman M.E."/>
            <person name="Gautier J."/>
        </authorList>
    </citation>
    <scope>FUNCTION</scope>
    <scope>SUBCELLULAR LOCATION</scope>
</reference>
<reference key="23">
    <citation type="journal article" date="1999" name="Nature">
        <title>Structure of Cdc42 in complex with the GTPase-binding domain of the 'Wiskott-Aldrich syndrome' protein.</title>
        <authorList>
            <person name="Abdul-Manan N."/>
            <person name="Aghazadeh B."/>
            <person name="Liu G.A."/>
            <person name="Majumdar A."/>
            <person name="Ouerfelli O."/>
            <person name="Siminovitch K.A."/>
            <person name="Rosen M.K."/>
        </authorList>
    </citation>
    <scope>STRUCTURE BY NMR OF 230-288 IN COMPLEX WITH CDC42</scope>
</reference>
<reference key="24">
    <citation type="journal article" date="2000" name="Nature">
        <title>Autoinhibition and activation mechanisms of the Wiskott-Aldrich syndrome protein.</title>
        <authorList>
            <person name="Kim A.S."/>
            <person name="Kakalis L.T."/>
            <person name="Abdul-Manan N."/>
            <person name="Liu G.A."/>
            <person name="Rosen M.K."/>
        </authorList>
    </citation>
    <scope>STRUCTURE BY NMR OF 242-492</scope>
    <scope>CONFORMATION CHANGE</scope>
</reference>
<reference key="25">
    <citation type="journal article" date="2004" name="Nat. Struct. Mol. Biol.">
        <title>Chemical inhibition of N-WASP by stabilization of a native autoinhibited conformation.</title>
        <authorList>
            <person name="Peterson J.R."/>
            <person name="Bickford L.C."/>
            <person name="Morgan D."/>
            <person name="Kim A.S."/>
            <person name="Ouerfelli O."/>
            <person name="Kirschner M.W."/>
            <person name="Rosen M.K."/>
        </authorList>
    </citation>
    <scope>STRUCTURE BY NMR OF 242-310 IN COMPLEX WITH WISKOSTATIN</scope>
</reference>
<reference key="26">
    <citation type="journal article" date="2005" name="Proc. Natl. Acad. Sci. U.S.A.">
        <title>Actin-bound structures of Wiskott-Aldrich syndrome protein (WASP)-homology domain 2 and the implications for filament assembly.</title>
        <authorList>
            <person name="Chereau D."/>
            <person name="Kerff F."/>
            <person name="Graceffa P."/>
            <person name="Grabarek Z."/>
            <person name="Langsetmo K."/>
            <person name="Dominguez R."/>
        </authorList>
    </citation>
    <scope>X-RAY CRYSTALLOGRAPHY (2.08 ANGSTROMS) OF 430-458 IN COMPLEX WITH ACTIN</scope>
    <scope>FUNCTION</scope>
    <scope>SUBUNIT</scope>
</reference>
<reference key="27">
    <citation type="journal article" date="2007" name="J. Biol. Chem.">
        <title>A hydrophobic pocket in the active site of glycolytic aldolase mediates interactions with Wiskott-Aldrich syndrome protein.</title>
        <authorList>
            <person name="St-Jean M."/>
            <person name="Izard T."/>
            <person name="Sygusch J."/>
        </authorList>
    </citation>
    <scope>X-RAY CRYSTALLOGRAPHY (2.05 ANGSTROMS) OF 488-502 IN COMPLEX WITH ALDOA</scope>
</reference>
<reference key="28">
    <citation type="journal article" date="2008" name="Nature">
        <title>Structural mechanism of WASP activation by the enterohaemorrhagic E. coli effector EspF(U).</title>
        <authorList>
            <person name="Cheng H.C."/>
            <person name="Skehan B.M."/>
            <person name="Campellone K.G."/>
            <person name="Leong J.M."/>
            <person name="Rosen M.K."/>
        </authorList>
    </citation>
    <scope>STRUCTURE BY NMR OF 242-310</scope>
    <scope>FUNCTION</scope>
    <scope>INTERACTION WITH E.COLI ESPF(U)</scope>
</reference>
<reference key="29">
    <citation type="journal article" date="1995" name="Hum. Mol. Genet.">
        <title>Identification of WASP mutations in patients with Wiskott-Aldrich syndrome and isolated thrombocytopenia reveals allelic heterogeneity at the WAS locus.</title>
        <authorList>
            <person name="Kolluri R."/>
            <person name="Shehabeldin A."/>
            <person name="Peacocke M."/>
            <person name="Lamhonwah A.-M."/>
            <person name="Teichert-Kuliszewska K."/>
            <person name="Weissman S.M."/>
            <person name="Siminovitch K.A."/>
        </authorList>
    </citation>
    <scope>VARIANTS WAS HIS-30 DEL; LYS-31; MET-75; PRO-82; CYS-86; HIS-86; CYS-97; LYS-133 AND GLU-476</scope>
</reference>
<reference key="30">
    <citation type="journal article" date="1995" name="Hum. Mol. Genet.">
        <title>WASP gene mutations in Wiskott-Aldrich syndrome and X-linked thrombocytopenia.</title>
        <authorList>
            <person name="Derry J.M.J."/>
            <person name="Kerns J.A."/>
            <person name="Weinberg K.I."/>
            <person name="Ochs H.D."/>
            <person name="Volpini V."/>
            <person name="Estivill X."/>
            <person name="Walker A.P."/>
            <person name="Francke U."/>
        </authorList>
    </citation>
    <scope>VARIANTS THC1 PHE-27; ILE-48 AND LYS-477</scope>
    <scope>VARIANTS WAS MET-75; LEU-86; HIS-86; LYS-131 AND CYS-187</scope>
</reference>
<reference key="31">
    <citation type="journal article" date="1995" name="Nat. Genet.">
        <title>X-linked thrombocytopenia and Wiskott-Aldrich syndrome are allelic diseases with mutations in the WASP gene.</title>
        <authorList>
            <person name="Villa A."/>
            <person name="Notarangelo L."/>
            <person name="Macchi P."/>
            <person name="Mantuano E."/>
            <person name="Cavagni G."/>
            <person name="Brugnoni D."/>
            <person name="Strina D."/>
            <person name="Patrosso M.C."/>
            <person name="Ramenghi U."/>
            <person name="Sacco M.G."/>
            <person name="Ugazio A."/>
            <person name="Vezzoni P."/>
        </authorList>
    </citation>
    <scope>VARIANTS THC1 VAL-56 AND GLU-236</scope>
</reference>
<reference key="32">
    <citation type="journal article" date="1996" name="Hum. Genet.">
        <title>Wiskott-Aldrich syndrome: no strict genotype-phenotype correlations but clustering of missense mutations in the amino-terminal part of the WASP gene product.</title>
        <authorList>
            <person name="Schindelhauer D."/>
            <person name="Weiss M."/>
            <person name="Hellebrand H."/>
            <person name="Golla A."/>
            <person name="Hergersberg M."/>
            <person name="Seger R."/>
            <person name="Belohradsky B.H."/>
            <person name="Meindl A."/>
        </authorList>
    </citation>
    <scope>VARIANT WAS HIS-86</scope>
</reference>
<reference key="33">
    <citation type="journal article" date="1997" name="J. Immunol.">
        <title>Variable expression of WASP in B cell lines of Wiskott-Aldrich syndrome patients.</title>
        <authorList>
            <person name="Remold-O'Donnell E."/>
            <person name="Cooley J."/>
            <person name="Shcherbina A."/>
            <person name="Hagemann T.L."/>
            <person name="Kwan S.-P."/>
            <person name="Kenney D.M."/>
            <person name="Rosen F.S."/>
        </authorList>
    </citation>
    <scope>VARIANTS WAS TRP-43; MET-45; MET-75 AND CYS-86</scope>
</reference>
<reference key="34">
    <citation type="journal article" date="1997" name="Pediatr. Res.">
        <title>Mutation analysis of five Japanese families with Wiskott-Aldrich syndrome and determination of the family members' carrier status using three different methods.</title>
        <authorList>
            <person name="Ariga T."/>
            <person name="Yamada M."/>
            <person name="Sakiyama Y."/>
        </authorList>
    </citation>
    <scope>VARIANTS WAS LYS-31 AND MET-45</scope>
</reference>
<reference key="35">
    <citation type="journal article" date="1998" name="Clin. Immunol. Immunopathol.">
        <title>Absence of expression of the Wiskott-Aldrich syndrome protein in peripheral blood cells of Wiskott-Aldrich syndrome patients.</title>
        <authorList>
            <person name="MacCarthy-Morrogh L."/>
            <person name="Gaspar H.B."/>
            <person name="Wang Y.-C."/>
            <person name="Katz F."/>
            <person name="Thompson L."/>
            <person name="Layton M."/>
            <person name="Jones A.M."/>
            <person name="Kinnon C."/>
        </authorList>
    </citation>
    <scope>VARIANTS WAS MET-75; LEU-84; ASP-89 AND LYS-133</scope>
</reference>
<reference key="36">
    <citation type="journal article" date="1998" name="J. Pathol.">
        <title>Defective actin polymerization in EBV-transformed B-cell lines from patients with the Wiskott-Aldrich syndrome.</title>
        <authorList>
            <person name="Facchetti F."/>
            <person name="Blanzuoli L."/>
            <person name="Vermi W."/>
            <person name="Notarangelo L.D."/>
            <person name="Giliani S."/>
            <person name="Fiorini M."/>
            <person name="Fasth A."/>
            <person name="Stewart D.M."/>
            <person name="Nelson D.L."/>
        </authorList>
    </citation>
    <scope>VARIANT WAS VAL-56</scope>
</reference>
<reference key="37">
    <citation type="journal article" date="1998" name="N. Engl. J. Med.">
        <title>X-linked Wiskott-Aldrich syndrome in a girl.</title>
        <authorList>
            <person name="Parolini O."/>
            <person name="Ressmann G."/>
            <person name="Haas O.A."/>
            <person name="Pawlowsky J."/>
            <person name="Gadner H."/>
            <person name="Knapp W."/>
            <person name="Holter W."/>
        </authorList>
    </citation>
    <scope>VARIANT WAS LYS-133</scope>
</reference>
<reference key="38">
    <citation type="journal article" date="2001" name="Br. J. Haematol.">
        <title>Missense C168T in the Wiskott-Aldrich Syndrome protein gene is a common mutation in X-linked thrombocytopenia.</title>
        <authorList>
            <person name="Ho L.L."/>
            <person name="Ayling J."/>
            <person name="Prosser I."/>
            <person name="Kronenberg H."/>
            <person name="Iland H."/>
            <person name="Joshua D."/>
        </authorList>
    </citation>
    <scope>VARIANT THC1 MET-45</scope>
</reference>
<reference key="39">
    <citation type="journal article" date="2001" name="Nat. Genet.">
        <title>Constitutively activating mutation in WASP causes X-linked severe congenital neutropenia.</title>
        <authorList>
            <person name="Devriendt K."/>
            <person name="Kim A.S."/>
            <person name="Mathijs G."/>
            <person name="Frints S.G.M."/>
            <person name="Schwartz M."/>
            <person name="Van Den Oord J.J."/>
            <person name="Verhoef G.E.G."/>
            <person name="Boogaerts M.A."/>
            <person name="Fryns J.-P."/>
            <person name="You D."/>
            <person name="Rosen M.K."/>
            <person name="Vandenberghe P."/>
        </authorList>
    </citation>
    <scope>VARIANT XLN PRO-270</scope>
    <scope>CHARACTERIZATION OF VARIANT XLN PRO-270</scope>
</reference>
<reference key="40">
    <citation type="journal article" date="1999" name="Hum. Mutat.">
        <title>Novel mutations in the Wiskott-Aldrich syndrome protein gene and their effects on transcriptional, translational, and clinical phenotypes.</title>
        <authorList>
            <person name="Lemahieu V."/>
            <person name="Gastier J.M."/>
            <person name="Francke U."/>
        </authorList>
    </citation>
    <scope>VARIANTS WAS ARG-73; CYS-86 AND LYS-133</scope>
    <scope>VARIANTS THC1 MET-75 AND CYS-83</scope>
</reference>
<reference key="41">
    <citation type="journal article" date="2002" name="Blood">
        <title>Missense mutations of the WASP gene cause intermittent X-linked thrombocytopenia.</title>
        <authorList>
            <person name="Notarangelo L.D."/>
            <person name="Mazza C."/>
            <person name="Giliani S."/>
            <person name="D'Aria C."/>
            <person name="Gandellini F."/>
            <person name="Ravelli C."/>
            <person name="Locatelli M.G."/>
            <person name="Nelson D.L."/>
            <person name="Ochs H.D."/>
            <person name="Notarangelo L.D."/>
        </authorList>
    </citation>
    <scope>VARIANTS THC1 ARG-58 AND ASN-481</scope>
</reference>
<reference key="42">
    <citation type="journal article" date="2002" name="Hum. Mutat.">
        <title>Wiskott-Aldrich syndrome in Argentina: 17 unique, including nine novel, mutations.</title>
        <authorList>
            <person name="El-Hakeh J."/>
            <person name="Rosenzweig S."/>
            <person name="Oleastro M."/>
            <person name="Basack N."/>
            <person name="Berozdnik L."/>
            <person name="Molina F."/>
            <person name="Rivas E.M."/>
            <person name="Zelazko M."/>
            <person name="Danielian S."/>
        </authorList>
    </citation>
    <scope>VARIANTS WAS HIS-52 AND TRP-70</scope>
</reference>
<reference key="43">
    <citation type="journal article" date="2014" name="Pediatr. Blood Cancer">
        <title>Intermittent X-linked thrombocytopenia with a novel WAS gene mutation.</title>
        <authorList>
            <person name="Wada T."/>
            <person name="Itoh M."/>
            <person name="Maeba H."/>
            <person name="Toma T."/>
            <person name="Niida Y."/>
            <person name="Saikawa Y."/>
            <person name="Yachie A."/>
        </authorList>
    </citation>
    <scope>VARIANT THR-56</scope>
</reference>
<reference key="44">
    <citation type="journal article" date="2016" name="J. Med. Genet.">
        <title>Homozygous missense mutation in the LMAN2L gene segregates with intellectual disability in a large consanguineous Pakistani family.</title>
        <authorList>
            <person name="Rafiullah R."/>
            <person name="Aslamkhan M."/>
            <person name="Paramasivam N."/>
            <person name="Thiel C."/>
            <person name="Mustafa G."/>
            <person name="Wiemann S."/>
            <person name="Schlesner M."/>
            <person name="Wade R.C."/>
            <person name="Rappold G.A."/>
            <person name="Berkel S."/>
        </authorList>
    </citation>
    <scope>VARIANT LYS-131</scope>
</reference>
<proteinExistence type="evidence at protein level"/>
<evidence type="ECO:0000250" key="1">
    <source>
        <dbReference type="UniProtKB" id="P70315"/>
    </source>
</evidence>
<evidence type="ECO:0000255" key="2">
    <source>
        <dbReference type="PROSITE-ProRule" id="PRU00057"/>
    </source>
</evidence>
<evidence type="ECO:0000255" key="3">
    <source>
        <dbReference type="PROSITE-ProRule" id="PRU00406"/>
    </source>
</evidence>
<evidence type="ECO:0000255" key="4">
    <source>
        <dbReference type="PROSITE-ProRule" id="PRU00410"/>
    </source>
</evidence>
<evidence type="ECO:0000256" key="5">
    <source>
        <dbReference type="SAM" id="MobiDB-lite"/>
    </source>
</evidence>
<evidence type="ECO:0000269" key="6">
    <source>
    </source>
</evidence>
<evidence type="ECO:0000269" key="7">
    <source>
    </source>
</evidence>
<evidence type="ECO:0000269" key="8">
    <source>
    </source>
</evidence>
<evidence type="ECO:0000269" key="9">
    <source>
    </source>
</evidence>
<evidence type="ECO:0000269" key="10">
    <source>
    </source>
</evidence>
<evidence type="ECO:0000269" key="11">
    <source>
    </source>
</evidence>
<evidence type="ECO:0000269" key="12">
    <source>
    </source>
</evidence>
<evidence type="ECO:0000269" key="13">
    <source>
    </source>
</evidence>
<evidence type="ECO:0000269" key="14">
    <source>
    </source>
</evidence>
<evidence type="ECO:0000269" key="15">
    <source>
    </source>
</evidence>
<evidence type="ECO:0000269" key="16">
    <source>
    </source>
</evidence>
<evidence type="ECO:0000269" key="17">
    <source>
    </source>
</evidence>
<evidence type="ECO:0000269" key="18">
    <source>
    </source>
</evidence>
<evidence type="ECO:0000269" key="19">
    <source>
    </source>
</evidence>
<evidence type="ECO:0000269" key="20">
    <source>
    </source>
</evidence>
<evidence type="ECO:0000269" key="21">
    <source>
    </source>
</evidence>
<evidence type="ECO:0000269" key="22">
    <source>
    </source>
</evidence>
<evidence type="ECO:0000269" key="23">
    <source>
    </source>
</evidence>
<evidence type="ECO:0000269" key="24">
    <source>
    </source>
</evidence>
<evidence type="ECO:0000269" key="25">
    <source>
    </source>
</evidence>
<evidence type="ECO:0000269" key="26">
    <source>
    </source>
</evidence>
<evidence type="ECO:0000269" key="27">
    <source>
    </source>
</evidence>
<evidence type="ECO:0000269" key="28">
    <source>
    </source>
</evidence>
<evidence type="ECO:0000269" key="29">
    <source>
    </source>
</evidence>
<evidence type="ECO:0000269" key="30">
    <source>
    </source>
</evidence>
<evidence type="ECO:0000269" key="31">
    <source>
    </source>
</evidence>
<evidence type="ECO:0000269" key="32">
    <source>
    </source>
</evidence>
<evidence type="ECO:0000269" key="33">
    <source>
    </source>
</evidence>
<evidence type="ECO:0000269" key="34">
    <source>
    </source>
</evidence>
<evidence type="ECO:0000269" key="35">
    <source>
    </source>
</evidence>
<evidence type="ECO:0000269" key="36">
    <source>
    </source>
</evidence>
<evidence type="ECO:0000269" key="37">
    <source>
    </source>
</evidence>
<evidence type="ECO:0000305" key="38"/>
<evidence type="ECO:0007744" key="39">
    <source>
    </source>
</evidence>
<evidence type="ECO:0007744" key="40">
    <source>
    </source>
</evidence>
<evidence type="ECO:0007744" key="41">
    <source>
    </source>
</evidence>
<evidence type="ECO:0007744" key="42">
    <source>
    </source>
</evidence>
<evidence type="ECO:0007829" key="43">
    <source>
        <dbReference type="PDB" id="1CEE"/>
    </source>
</evidence>
<evidence type="ECO:0007829" key="44">
    <source>
        <dbReference type="PDB" id="1EJ5"/>
    </source>
</evidence>
<evidence type="ECO:0007829" key="45">
    <source>
        <dbReference type="PDB" id="2A3Z"/>
    </source>
</evidence>
<accession>P42768</accession>
<accession>Q9BU11</accession>
<accession>Q9UNJ9</accession>
<feature type="initiator methionine" description="Removed" evidence="13">
    <location>
        <position position="1"/>
    </location>
</feature>
<feature type="chain" id="PRO_0000188990" description="Actin nucleation-promoting factor WAS">
    <location>
        <begin position="2"/>
        <end position="502"/>
    </location>
</feature>
<feature type="domain" description="WH1" evidence="4">
    <location>
        <begin position="39"/>
        <end position="148"/>
    </location>
</feature>
<feature type="domain" description="CRIB" evidence="2">
    <location>
        <begin position="238"/>
        <end position="251"/>
    </location>
</feature>
<feature type="repeat" description="GRSGPLPPXP motif 1">
    <location>
        <begin position="337"/>
        <end position="346"/>
    </location>
</feature>
<feature type="repeat" description="GRSGPLPPXP motif 2">
    <location>
        <begin position="376"/>
        <end position="385"/>
    </location>
</feature>
<feature type="domain" description="WH2" evidence="3">
    <location>
        <begin position="430"/>
        <end position="447"/>
    </location>
</feature>
<feature type="region of interest" description="Disordered" evidence="5">
    <location>
        <begin position="146"/>
        <end position="240"/>
    </location>
</feature>
<feature type="region of interest" description="Disordered" evidence="5">
    <location>
        <begin position="307"/>
        <end position="502"/>
    </location>
</feature>
<feature type="compositionally biased region" description="Polar residues" evidence="5">
    <location>
        <begin position="201"/>
        <end position="211"/>
    </location>
</feature>
<feature type="compositionally biased region" description="Pro residues" evidence="5">
    <location>
        <begin position="341"/>
        <end position="419"/>
    </location>
</feature>
<feature type="compositionally biased region" description="Acidic residues" evidence="5">
    <location>
        <begin position="486"/>
        <end position="502"/>
    </location>
</feature>
<feature type="modified residue" description="Phosphoserine" evidence="42">
    <location>
        <position position="221"/>
    </location>
</feature>
<feature type="modified residue" description="Phosphotyrosine; by FYN and HCK" evidence="12 15 39 40 41">
    <location>
        <position position="291"/>
    </location>
</feature>
<feature type="modified residue" description="Phosphoserine; by CK2" evidence="14 40 41">
    <location>
        <position position="483"/>
    </location>
</feature>
<feature type="modified residue" description="Phosphoserine; by CK2" evidence="14 40">
    <location>
        <position position="484"/>
    </location>
</feature>
<feature type="sequence variant" id="VAR_005823" description="In THC1." evidence="28">
    <original>L</original>
    <variation>F</variation>
    <location>
        <position position="27"/>
    </location>
</feature>
<feature type="sequence variant" id="VAR_005824" description="In THC1." evidence="27">
    <location>
        <position position="30"/>
    </location>
</feature>
<feature type="sequence variant" id="VAR_005825" description="In WAS; dbSNP:rs1557006239." evidence="27 32">
    <original>E</original>
    <variation>K</variation>
    <location>
        <position position="31"/>
    </location>
</feature>
<feature type="sequence variant" id="VAR_008105" description="In WAS; moderate form." evidence="24 33">
    <original>C</original>
    <variation>W</variation>
    <location>
        <position position="43"/>
    </location>
</feature>
<feature type="sequence variant" id="VAR_008106" description="In WAS and THC1; dbSNP:rs132630273." evidence="8 24 32 33">
    <original>T</original>
    <variation>M</variation>
    <location>
        <position position="45"/>
    </location>
</feature>
<feature type="sequence variant" id="VAR_005826" description="In THC1." evidence="28">
    <original>T</original>
    <variation>I</variation>
    <location>
        <position position="48"/>
    </location>
</feature>
<feature type="sequence variant" id="VAR_012710" description="In WAS." evidence="10">
    <original>Q</original>
    <variation>H</variation>
    <location>
        <position position="52"/>
    </location>
</feature>
<feature type="sequence variant" id="VAR_074020" description="Found in a patient with THC1; uncertain significance." evidence="21">
    <original>A</original>
    <variation>T</variation>
    <location>
        <position position="56"/>
    </location>
</feature>
<feature type="sequence variant" id="VAR_005827" description="In THC1; dbSNP:rs132630269." evidence="25 37">
    <original>A</original>
    <variation>V</variation>
    <location>
        <position position="56"/>
    </location>
</feature>
<feature type="sequence variant" id="VAR_022806" description="In WAS." evidence="24">
    <original>P</original>
    <variation>L</variation>
    <location>
        <position position="58"/>
    </location>
</feature>
<feature type="sequence variant" id="VAR_033255" description="In THC1; dbSNP:rs132630275." evidence="11">
    <original>P</original>
    <variation>R</variation>
    <location>
        <position position="58"/>
    </location>
</feature>
<feature type="sequence variant" id="VAR_012711" description="In WAS." evidence="10">
    <original>G</original>
    <variation>W</variation>
    <location>
        <position position="70"/>
    </location>
</feature>
<feature type="sequence variant" id="VAR_008107" description="In WAS; severe form." evidence="7">
    <original>C</original>
    <variation>R</variation>
    <location>
        <position position="73"/>
    </location>
</feature>
<feature type="sequence variant" id="VAR_005828" description="In THC1; dbSNP:rs782290433." evidence="7 27 28 33 36">
    <original>V</original>
    <variation>M</variation>
    <location>
        <position position="75"/>
    </location>
</feature>
<feature type="sequence variant" id="VAR_005829" description="In WAS; attenuated form; dbSNP:rs132630272." evidence="27">
    <original>S</original>
    <variation>P</variation>
    <location>
        <position position="82"/>
    </location>
</feature>
<feature type="sequence variant" id="VAR_008108" description="In THC1." evidence="7">
    <original>Y</original>
    <variation>C</variation>
    <location>
        <position position="83"/>
    </location>
</feature>
<feature type="sequence variant" id="VAR_008109" description="In WAS; severe form." evidence="36">
    <original>F</original>
    <variation>L</variation>
    <location>
        <position position="84"/>
    </location>
</feature>
<feature type="sequence variant" id="VAR_005832" description="In WAS." evidence="7 27 33">
    <original>R</original>
    <variation>C</variation>
    <location>
        <position position="86"/>
    </location>
</feature>
<feature type="sequence variant" id="VAR_005830" description="In WAS; dbSNP:rs132630268." evidence="27 28 31">
    <original>R</original>
    <variation>H</variation>
    <location>
        <position position="86"/>
    </location>
</feature>
<feature type="sequence variant" id="VAR_005831" description="In WAS; dbSNP:rs132630268." evidence="28">
    <original>R</original>
    <variation>L</variation>
    <location>
        <position position="86"/>
    </location>
</feature>
<feature type="sequence variant" id="VAR_008110" description="In WAS; mild form; dbSNP:rs139857045." evidence="36">
    <original>G</original>
    <variation>D</variation>
    <location>
        <position position="89"/>
    </location>
</feature>
<feature type="sequence variant" id="VAR_005833" description="In WAS; attenuated form." evidence="27">
    <original>W</original>
    <variation>C</variation>
    <location>
        <position position="97"/>
    </location>
</feature>
<feature type="sequence variant" id="VAR_005834" description="In WAS; found in a patient with MRT52; dbSNP:rs146220228." evidence="22 28">
    <original>E</original>
    <variation>K</variation>
    <location>
        <position position="131"/>
    </location>
</feature>
<feature type="sequence variant" id="VAR_005835" description="In WAS; severe form." evidence="7 24 27 35 36">
    <original>E</original>
    <variation>K</variation>
    <location>
        <position position="133"/>
    </location>
</feature>
<feature type="sequence variant" id="VAR_022807" description="In WAS." evidence="24">
    <original>A</original>
    <variation>T</variation>
    <location>
        <position position="134"/>
    </location>
</feature>
<feature type="sequence variant" id="VAR_005836" description="In WAS." evidence="28">
    <original>G</original>
    <variation>C</variation>
    <location>
        <position position="187"/>
    </location>
</feature>
<feature type="sequence variant" id="VAR_005837" description="In THC1." evidence="25">
    <original>A</original>
    <variation>E</variation>
    <location>
        <position position="236"/>
    </location>
</feature>
<feature type="sequence variant" id="VAR_033256" description="In XLN; a constitutively activating mutation; dbSNP:rs132630274." evidence="9">
    <original>L</original>
    <variation>P</variation>
    <location>
        <position position="270"/>
    </location>
</feature>
<feature type="sequence variant" id="VAR_005838" description="In WAS." evidence="27">
    <original>K</original>
    <variation>E</variation>
    <location>
        <position position="476"/>
    </location>
</feature>
<feature type="sequence variant" id="VAR_005839" description="In THC1." evidence="28">
    <original>R</original>
    <variation>K</variation>
    <location>
        <position position="477"/>
    </location>
</feature>
<feature type="sequence variant" id="VAR_033257" description="In THC1; dbSNP:rs132630276." evidence="11">
    <original>I</original>
    <variation>N</variation>
    <location>
        <position position="481"/>
    </location>
</feature>
<feature type="sequence conflict" description="In Ref. 4; AAD26691." evidence="38" ref="4">
    <original>V</original>
    <variation>A</variation>
    <location>
        <position position="332"/>
    </location>
</feature>
<feature type="turn" evidence="43">
    <location>
        <begin position="235"/>
        <end position="237"/>
    </location>
</feature>
<feature type="strand" evidence="43">
    <location>
        <begin position="245"/>
        <end position="250"/>
    </location>
</feature>
<feature type="turn" evidence="43">
    <location>
        <begin position="254"/>
        <end position="256"/>
    </location>
</feature>
<feature type="turn" evidence="44">
    <location>
        <begin position="260"/>
        <end position="262"/>
    </location>
</feature>
<feature type="helix" evidence="43">
    <location>
        <begin position="265"/>
        <end position="271"/>
    </location>
</feature>
<feature type="turn" evidence="43">
    <location>
        <begin position="272"/>
        <end position="275"/>
    </location>
</feature>
<feature type="helix" evidence="44">
    <location>
        <begin position="278"/>
        <end position="281"/>
    </location>
</feature>
<feature type="helix" evidence="44">
    <location>
        <begin position="284"/>
        <end position="296"/>
    </location>
</feature>
<feature type="helix" evidence="44">
    <location>
        <begin position="299"/>
        <end position="309"/>
    </location>
</feature>
<feature type="helix" evidence="45">
    <location>
        <begin position="432"/>
        <end position="440"/>
    </location>
</feature>
<comment type="function">
    <text evidence="12 14 17 19 20 23 29 34">Effector protein for Rho-type GTPases that regulates actin filament reorganization via its interaction with the Arp2/3 complex (PubMed:12235133, PubMed:12769847, PubMed:16275905). Important for efficient actin polymerization (PubMed:12235133, PubMed:16275905, PubMed:8625410). Possible regulator of lymphocyte and platelet function (PubMed:9405671). Mediates actin filament reorganization and the formation of actin pedestals upon infection by pathogenic bacteria (PubMed:18650809). In addition to its role in the cytoplasmic cytoskeleton, also promotes actin polymerization in the nucleus, thereby regulating gene transcription and repair of damaged DNA (PubMed:20574068). Promotes homologous recombination (HR) repair in response to DNA damage by promoting nuclear actin polymerization, leading to drive motility of double-strand breaks (DSBs) (PubMed:29925947).</text>
</comment>
<comment type="subunit">
    <text evidence="1 6 12 14 16 18 30 34">Binds the Arp2/3 complex (PubMed:12769847). Interacts with CDC42, RAC, NCK, HCK, FYN, SRC kinase FGR, BTK, ABL1, PSTPIP1, WIP, and to the p85 subunit of PLC-gamma (PubMed:10360578, PubMed:12235133, PubMed:15235593, PubMed:8643625, PubMed:9405671). Interacts (via C-terminus) with ALDOA (PubMed:17329259). Interacts with NCK1 (via SH3 domains) (By similarity). Interacts with FCHSD2 (By similarity).</text>
</comment>
<comment type="subunit">
    <text evidence="19">(Microbial infection) Interacts with E.coli effector protein EspF(U).</text>
</comment>
<comment type="interaction">
    <interactant intactId="EBI-346375">
        <id>P42768</id>
    </interactant>
    <interactant intactId="EBI-742038">
        <id>Q9P2A4</id>
        <label>ABI3</label>
    </interactant>
    <organismsDiffer>false</organismsDiffer>
    <experiments>4</experiments>
</comment>
<comment type="interaction">
    <interactant intactId="EBI-346375">
        <id>P42768</id>
    </interactant>
    <interactant intactId="EBI-743771">
        <id>Q92624</id>
        <label>APPBP2</label>
    </interactant>
    <organismsDiffer>false</organismsDiffer>
    <experiments>3</experiments>
</comment>
<comment type="interaction">
    <interactant intactId="EBI-346375">
        <id>P42768</id>
    </interactant>
    <interactant intactId="EBI-624835">
        <id>Q06187</id>
        <label>BTK</label>
    </interactant>
    <organismsDiffer>false</organismsDiffer>
    <experiments>4</experiments>
</comment>
<comment type="interaction">
    <interactant intactId="EBI-346375">
        <id>P42768</id>
    </interactant>
    <interactant intactId="EBI-81752">
        <id>P60953</id>
        <label>CDC42</label>
    </interactant>
    <organismsDiffer>false</organismsDiffer>
    <experiments>12</experiments>
</comment>
<comment type="interaction">
    <interactant intactId="EBI-346375">
        <id>P42768</id>
    </interactant>
    <interactant intactId="EBI-351886">
        <id>Q14247</id>
        <label>CTTN</label>
    </interactant>
    <organismsDiffer>false</organismsDiffer>
    <experiments>3</experiments>
</comment>
<comment type="interaction">
    <interactant intactId="EBI-346375">
        <id>P42768</id>
    </interactant>
    <interactant intactId="EBI-346340">
        <id>P08631</id>
        <label>HCK</label>
    </interactant>
    <organismsDiffer>false</organismsDiffer>
    <experiments>9</experiments>
</comment>
<comment type="interaction">
    <interactant intactId="EBI-346375">
        <id>P42768</id>
    </interactant>
    <interactant intactId="EBI-713635">
        <id>O43639</id>
        <label>NCK2</label>
    </interactant>
    <organismsDiffer>false</organismsDiffer>
    <experiments>3</experiments>
</comment>
<comment type="interaction">
    <interactant intactId="EBI-346375">
        <id>P42768</id>
    </interactant>
    <interactant intactId="EBI-2481535">
        <id>Q8WV41</id>
        <label>SNX33</label>
    </interactant>
    <organismsDiffer>false</organismsDiffer>
    <experiments>3</experiments>
</comment>
<comment type="interaction">
    <interactant intactId="EBI-346375">
        <id>P42768</id>
    </interactant>
    <interactant intactId="EBI-77848">
        <id>Q9Y5X1</id>
        <label>SNX9</label>
    </interactant>
    <organismsDiffer>false</organismsDiffer>
    <experiments>2</experiments>
</comment>
<comment type="interaction">
    <interactant intactId="EBI-346375">
        <id>P42768</id>
    </interactant>
    <interactant intactId="EBI-311323">
        <id>O94875</id>
        <label>SORBS2</label>
    </interactant>
    <organismsDiffer>false</organismsDiffer>
    <experiments>3</experiments>
</comment>
<comment type="interaction">
    <interactant intactId="EBI-346375">
        <id>P42768</id>
    </interactant>
    <interactant intactId="EBI-876302">
        <id>P11387</id>
        <label>TOP1</label>
    </interactant>
    <organismsDiffer>false</organismsDiffer>
    <experiments>3</experiments>
</comment>
<comment type="interaction">
    <interactant intactId="EBI-346375">
        <id>P42768</id>
    </interactant>
    <interactant intactId="EBI-7353612">
        <id>P57075-2</id>
        <label>UBASH3A</label>
    </interactant>
    <organismsDiffer>false</organismsDiffer>
    <experiments>3</experiments>
</comment>
<comment type="interaction">
    <interactant intactId="EBI-346375">
        <id>P42768</id>
    </interactant>
    <interactant intactId="EBI-346375">
        <id>P42768</id>
        <label>WAS</label>
    </interactant>
    <organismsDiffer>false</organismsDiffer>
    <experiments>4</experiments>
</comment>
<comment type="interaction">
    <interactant intactId="EBI-346375">
        <id>P42768</id>
    </interactant>
    <interactant intactId="EBI-346356">
        <id>O43516</id>
        <label>WIPF1</label>
    </interactant>
    <organismsDiffer>false</organismsDiffer>
    <experiments>25</experiments>
</comment>
<comment type="interaction">
    <interactant intactId="EBI-346375">
        <id>P42768</id>
    </interactant>
    <interactant intactId="EBI-12052927">
        <id>O43516-4</id>
        <label>WIPF1</label>
    </interactant>
    <organismsDiffer>false</organismsDiffer>
    <experiments>3</experiments>
</comment>
<comment type="interaction">
    <interactant intactId="EBI-346375">
        <id>P42768</id>
    </interactant>
    <interactant intactId="EBI-10039462">
        <id>P0DJ88</id>
        <label>espF(U)</label>
    </interactant>
    <organismsDiffer>true</organismsDiffer>
    <experiments>3</experiments>
</comment>
<comment type="interaction">
    <interactant intactId="EBI-346375">
        <id>P42768</id>
    </interactant>
    <interactant intactId="EBI-6248894">
        <id>P08103</id>
        <label>Hck</label>
    </interactant>
    <organismsDiffer>true</organismsDiffer>
    <experiments>3</experiments>
</comment>
<comment type="subcellular location">
    <subcellularLocation>
        <location evidence="29">Cytoplasm</location>
        <location evidence="29">Cytoskeleton</location>
    </subcellularLocation>
    <subcellularLocation>
        <location evidence="20 23">Nucleus</location>
    </subcellularLocation>
</comment>
<comment type="tissue specificity">
    <text evidence="26">Expressed predominantly in the thymus. Also found, to a much lesser extent, in the spleen.</text>
</comment>
<comment type="domain">
    <text>The WH1 (Wasp homology 1) domain may bind a Pro-rich ligand.</text>
</comment>
<comment type="domain">
    <text>The CRIB (Cdc42/Rac-interactive-binding) region binds to the C-terminal WH2 domain in the autoinhibited state of the protein. Binding of Rho-type GTPases to the CRIB induces a conformation change and leads to activation.</text>
</comment>
<comment type="PTM">
    <text evidence="12 14 15">Phosphorylated at Tyr-291 by FYN and HCK, inducing WAS effector activity after TCR engagement. Phosphorylation at Tyr-291 enhances WAS activity in promoting actin polymerization and filopodia formation.</text>
</comment>
<comment type="disease" evidence="7 10 20 24 27 28 31 32 33 35 36 37">
    <disease id="DI-01147">
        <name>Wiskott-Aldrich syndrome</name>
        <acronym>WAS</acronym>
        <description>An X-linked recessive immunodeficiency characterized by eczema, thrombocytopenia, recurrent infections, and bloody diarrhea. Death usually occurs before age 10.</description>
        <dbReference type="MIM" id="301000"/>
    </disease>
    <text>The disease is caused by variants affecting the gene represented in this entry.</text>
</comment>
<comment type="disease" evidence="7 8 11 25 28">
    <disease id="DI-01098">
        <name>Thrombocytopenia 1</name>
        <acronym>THC1</acronym>
        <description>A form of thrombocytopenia, a hematologic disorder defined by a decrease in the number of platelets in circulating blood, resulting in the potential for increased bleeding and decreased ability for clotting.</description>
        <dbReference type="MIM" id="313900"/>
    </disease>
    <text>The disease is caused by variants affecting the gene represented in this entry.</text>
</comment>
<comment type="disease" evidence="9">
    <disease id="DI-02457">
        <name>Neutropenia, severe congenital, X-linked</name>
        <acronym>XLN</acronym>
        <description>A disorder of hematopoiesis characterized by maturation arrest of granulopoiesis at the level of promyelocytes with peripheral blood absolute neutrophil counts below 0.5 x 10(9)/l and early onset of severe bacterial infections.</description>
        <dbReference type="MIM" id="300299"/>
    </disease>
    <text>The disease is caused by variants affecting the gene represented in this entry.</text>
</comment>
<comment type="sequence caution" evidence="38">
    <conflict type="erroneous initiation">
        <sequence resource="EMBL-CDS" id="AAH02961"/>
    </conflict>
</comment>
<comment type="sequence caution" evidence="38">
    <conflict type="erroneous initiation">
        <sequence resource="EMBL-CDS" id="AAH02961"/>
    </conflict>
    <text>Extended N-terminus.</text>
</comment>
<comment type="online information" name="WASbase">
    <link uri="https://databases.lovd.nl/shared/genes/WAS"/>
    <text>WAS mutation db</text>
</comment>
<comment type="online information" name="Wikipedia">
    <link uri="https://en.wikipedia.org/wiki/Wiskott-Aldrich_syndrome_protein"/>
    <text>Wiskott-Aldrich syndrome protein entry</text>
</comment>
<comment type="online information" name="Atlas of Genetics and Cytogenetics in Oncology and Haematology">
    <link uri="https://atlasgeneticsoncology.org/gene/42801/WAS"/>
</comment>
<organism>
    <name type="scientific">Homo sapiens</name>
    <name type="common">Human</name>
    <dbReference type="NCBI Taxonomy" id="9606"/>
    <lineage>
        <taxon>Eukaryota</taxon>
        <taxon>Metazoa</taxon>
        <taxon>Chordata</taxon>
        <taxon>Craniata</taxon>
        <taxon>Vertebrata</taxon>
        <taxon>Euteleostomi</taxon>
        <taxon>Mammalia</taxon>
        <taxon>Eutheria</taxon>
        <taxon>Euarchontoglires</taxon>
        <taxon>Primates</taxon>
        <taxon>Haplorrhini</taxon>
        <taxon>Catarrhini</taxon>
        <taxon>Hominidae</taxon>
        <taxon>Homo</taxon>
    </lineage>
</organism>